<gene>
    <name type="primary">TUFT1</name>
</gene>
<accession>P27628</accession>
<accession>O97683</accession>
<feature type="chain" id="PRO_0000183185" description="Tuftelin">
    <location>
        <begin position="1"/>
        <end position="390"/>
    </location>
</feature>
<feature type="coiled-coil region" evidence="3">
    <location>
        <begin position="88"/>
        <end position="126"/>
    </location>
</feature>
<feature type="coiled-coil region" evidence="3">
    <location>
        <begin position="162"/>
        <end position="351"/>
    </location>
</feature>
<feature type="modified residue" description="Phosphoserine" evidence="3">
    <location>
        <position position="171"/>
    </location>
</feature>
<feature type="splice variant" id="VSP_006682" description="In isoform 2." evidence="6">
    <location>
        <begin position="21"/>
        <end position="45"/>
    </location>
</feature>
<feature type="splice variant" id="VSP_006683" description="In isoform 3." evidence="6">
    <location>
        <begin position="109"/>
        <end position="138"/>
    </location>
</feature>
<feature type="splice variant" id="VSP_006684" description="In isoform 4." evidence="6">
    <location>
        <begin position="139"/>
        <end position="160"/>
    </location>
</feature>
<feature type="sequence conflict" description="In Ref. 2; AAA30797." evidence="6" ref="2">
    <original>E</original>
    <variation>D</variation>
    <location>
        <position position="242"/>
    </location>
</feature>
<comment type="function">
    <text evidence="2 5">Involved in the structural organization of the epidermis (By similarity). Involved in the mineralization and structural organization of enamel.</text>
</comment>
<comment type="subunit">
    <text evidence="1">Interacts with TFIP11.</text>
</comment>
<comment type="subcellular location">
    <subcellularLocation>
        <location evidence="5">Secreted</location>
    </subcellularLocation>
    <text evidence="5">Secreted at a very early stage of enamel formation, and tightly bound to the surface of the growing crystallites.</text>
</comment>
<comment type="alternative products">
    <event type="alternative splicing"/>
    <isoform>
        <id>P27628-1</id>
        <name>1</name>
        <sequence type="displayed"/>
    </isoform>
    <isoform>
        <id>P27628-2</id>
        <name>2</name>
        <sequence type="described" ref="VSP_006682"/>
    </isoform>
    <isoform>
        <id>P27628-3</id>
        <name>3</name>
        <sequence type="described" ref="VSP_006683"/>
    </isoform>
    <isoform>
        <id>P27628-4</id>
        <name>4</name>
        <sequence type="described" ref="VSP_006684"/>
    </isoform>
</comment>
<comment type="tissue specificity">
    <text evidence="4">Present in the extracellular enamel and is mainly associated with the crystal component.</text>
</comment>
<comment type="similarity">
    <text evidence="6">Belongs to the tuftelin family.</text>
</comment>
<comment type="sequence caution" evidence="6">
    <conflict type="frameshift">
        <sequence resource="EMBL-CDS" id="AAA30797"/>
    </conflict>
</comment>
<name>TUFT1_BOVIN</name>
<reference key="1">
    <citation type="journal article" date="1991" name="J. Biol. Chem.">
        <title>Sequencing of bovine enamelin ('tuftelin') a novel acidic enamel protein.</title>
        <authorList>
            <person name="Deutsch D."/>
            <person name="Palmon A."/>
            <person name="Fisher L.W."/>
            <person name="Kolodny N."/>
            <person name="Termine J.D."/>
            <person name="Young M.F."/>
        </authorList>
    </citation>
    <scope>NUCLEOTIDE SEQUENCE [MRNA]</scope>
    <scope>SUBCELLULAR LOCATION</scope>
    <scope>TISSUE SPECIFICITY</scope>
    <source>
        <strain>Holstein</strain>
        <tissue>Ameloblast</tissue>
    </source>
</reference>
<reference key="2">
    <citation type="journal article" date="1997" name="Arch. Oral Biol.">
        <title>Molecular cloning and characterization of the bovine tuftelin gene.</title>
        <authorList>
            <person name="Bashir M.M."/>
            <person name="Abrams W.R."/>
            <person name="Rosenbloom J."/>
        </authorList>
    </citation>
    <scope>NUCLEOTIDE SEQUENCE [MRNA]</scope>
    <scope>ALTERNATIVE SPLICING</scope>
    <source>
        <tissue>Enamel organ</tissue>
    </source>
</reference>
<reference key="3">
    <citation type="submission" date="1998-11" db="EMBL/GenBank/DDBJ databases">
        <authorList>
            <person name="Bashir M.M."/>
            <person name="Abrams W.R."/>
            <person name="Rosenbloom J."/>
        </authorList>
    </citation>
    <scope>SEQUENCE REVISION</scope>
</reference>
<dbReference type="EMBL" id="M64924">
    <property type="protein sequence ID" value="AAA30797.1"/>
    <property type="status" value="ALT_FRAME"/>
    <property type="molecule type" value="mRNA"/>
</dbReference>
<dbReference type="EMBL" id="AF105228">
    <property type="protein sequence ID" value="AAC84147.1"/>
    <property type="molecule type" value="mRNA"/>
</dbReference>
<dbReference type="PIR" id="A40809">
    <property type="entry name" value="A40809"/>
</dbReference>
<dbReference type="RefSeq" id="NP_776904.1">
    <molecule id="P27628-1"/>
    <property type="nucleotide sequence ID" value="NM_174479.2"/>
</dbReference>
<dbReference type="SMR" id="P27628"/>
<dbReference type="FunCoup" id="P27628">
    <property type="interactions" value="103"/>
</dbReference>
<dbReference type="STRING" id="9913.ENSBTAP00000043710"/>
<dbReference type="PaxDb" id="9913-ENSBTAP00000043710"/>
<dbReference type="GeneID" id="282104"/>
<dbReference type="KEGG" id="bta:282104"/>
<dbReference type="CTD" id="7286"/>
<dbReference type="eggNOG" id="ENOG502QW76">
    <property type="taxonomic scope" value="Eukaryota"/>
</dbReference>
<dbReference type="InParanoid" id="P27628"/>
<dbReference type="OrthoDB" id="8944635at2759"/>
<dbReference type="Proteomes" id="UP000009136">
    <property type="component" value="Unplaced"/>
</dbReference>
<dbReference type="GO" id="GO:0005576">
    <property type="term" value="C:extracellular region"/>
    <property type="evidence" value="ECO:0007669"/>
    <property type="project" value="UniProtKB-SubCell"/>
</dbReference>
<dbReference type="GO" id="GO:0031674">
    <property type="term" value="C:I band"/>
    <property type="evidence" value="ECO:0000318"/>
    <property type="project" value="GO_Central"/>
</dbReference>
<dbReference type="GO" id="GO:0005665">
    <property type="term" value="C:RNA polymerase II, core complex"/>
    <property type="evidence" value="ECO:0000318"/>
    <property type="project" value="GO_Central"/>
</dbReference>
<dbReference type="GO" id="GO:0042802">
    <property type="term" value="F:identical protein binding"/>
    <property type="evidence" value="ECO:0000353"/>
    <property type="project" value="BHF-UCL"/>
</dbReference>
<dbReference type="GO" id="GO:0030280">
    <property type="term" value="F:structural constituent of skin epidermis"/>
    <property type="evidence" value="ECO:0000250"/>
    <property type="project" value="UniProtKB"/>
</dbReference>
<dbReference type="GO" id="GO:0031214">
    <property type="term" value="P:biomineral tissue development"/>
    <property type="evidence" value="ECO:0007669"/>
    <property type="project" value="UniProtKB-KW"/>
</dbReference>
<dbReference type="InterPro" id="IPR051375">
    <property type="entry name" value="Tuftelin_GRINL1A/MYZAP/CCD68"/>
</dbReference>
<dbReference type="PANTHER" id="PTHR23171">
    <property type="entry name" value="GDOWN1"/>
    <property type="match status" value="1"/>
</dbReference>
<dbReference type="PANTHER" id="PTHR23171:SF4">
    <property type="entry name" value="TUFTELIN"/>
    <property type="match status" value="1"/>
</dbReference>
<dbReference type="SUPFAM" id="SSF57997">
    <property type="entry name" value="Tropomyosin"/>
    <property type="match status" value="1"/>
</dbReference>
<organism>
    <name type="scientific">Bos taurus</name>
    <name type="common">Bovine</name>
    <dbReference type="NCBI Taxonomy" id="9913"/>
    <lineage>
        <taxon>Eukaryota</taxon>
        <taxon>Metazoa</taxon>
        <taxon>Chordata</taxon>
        <taxon>Craniata</taxon>
        <taxon>Vertebrata</taxon>
        <taxon>Euteleostomi</taxon>
        <taxon>Mammalia</taxon>
        <taxon>Eutheria</taxon>
        <taxon>Laurasiatheria</taxon>
        <taxon>Artiodactyla</taxon>
        <taxon>Ruminantia</taxon>
        <taxon>Pecora</taxon>
        <taxon>Bovidae</taxon>
        <taxon>Bovinae</taxon>
        <taxon>Bos</taxon>
    </lineage>
</organism>
<proteinExistence type="evidence at transcript level"/>
<sequence length="390" mass="44343">MNGTRNWCTLVDVHPEGQTAGSVDVLRLTLQSELTGDELERIAQKAGRKTYAMVSSHSTSHSLASELVESNDGHEEIIKVYLKGRSGDKMIHEKNINQLKSEVQYIQEARNCLQKLREDISSKLDRDPGDSVHKQEIQVVLEKQNGLSEGPLTTYSSPPEVDTHINEDVESLRKTVQDLLVKLQEAEQQHQSDCSAFKVTLSQYQREAKQSQVALQRAEDRAEQKEAEVGELQRRLQGMETEYQAILAKVREGETALEELRSKNVDCQAEQEKAANLEKEVAGLREKIHHLDDMLKSQQRKVRQMIEQLQNSKAVIQSKDTTIQELKEKIAYLEAENLEMHDRMEHLIEKQISHGNFSTQNRAKTENLGSIRISKPPSPKPMPLIRVVET</sequence>
<evidence type="ECO:0000250" key="1">
    <source>
        <dbReference type="UniProtKB" id="O08970"/>
    </source>
</evidence>
<evidence type="ECO:0000250" key="2">
    <source>
        <dbReference type="UniProtKB" id="Q9NNX1"/>
    </source>
</evidence>
<evidence type="ECO:0000255" key="3"/>
<evidence type="ECO:0000269" key="4">
    <source>
    </source>
</evidence>
<evidence type="ECO:0000303" key="5">
    <source>
    </source>
</evidence>
<evidence type="ECO:0000305" key="6"/>
<keyword id="KW-0025">Alternative splicing</keyword>
<keyword id="KW-0091">Biomineralization</keyword>
<keyword id="KW-0175">Coiled coil</keyword>
<keyword id="KW-0597">Phosphoprotein</keyword>
<keyword id="KW-1185">Reference proteome</keyword>
<keyword id="KW-0964">Secreted</keyword>
<protein>
    <recommendedName>
        <fullName evidence="5">Tuftelin</fullName>
    </recommendedName>
    <alternativeName>
        <fullName>Enamelin</fullName>
    </alternativeName>
</protein>